<sequence>MQEKAVVLDDQMIRRALTRISHEIVERNKGVDNCVLVGIKTRGIFIAQRLAERIGQIEGKEMEVGELDITLYRDDLTLQSKNKEPLVKGSDIPVDITKKKVILVDDVLYTGRTVRAAMDALMDLGRPSQIQLAVLVDRGHRELPIRADYVGKNIPTSSEERIEVDLQETDQQDRVSIYDK</sequence>
<name>PYRR_BACC7</name>
<gene>
    <name evidence="1" type="primary">pyrR</name>
    <name type="ordered locus">BCAH187_A3942</name>
</gene>
<organism>
    <name type="scientific">Bacillus cereus (strain AH187)</name>
    <dbReference type="NCBI Taxonomy" id="405534"/>
    <lineage>
        <taxon>Bacteria</taxon>
        <taxon>Bacillati</taxon>
        <taxon>Bacillota</taxon>
        <taxon>Bacilli</taxon>
        <taxon>Bacillales</taxon>
        <taxon>Bacillaceae</taxon>
        <taxon>Bacillus</taxon>
        <taxon>Bacillus cereus group</taxon>
    </lineage>
</organism>
<feature type="chain" id="PRO_1000139187" description="Bifunctional protein PyrR">
    <location>
        <begin position="1"/>
        <end position="180"/>
    </location>
</feature>
<feature type="short sequence motif" description="PRPP-binding" evidence="1">
    <location>
        <begin position="101"/>
        <end position="113"/>
    </location>
</feature>
<reference key="1">
    <citation type="submission" date="2008-10" db="EMBL/GenBank/DDBJ databases">
        <title>Genome sequence of Bacillus cereus AH187.</title>
        <authorList>
            <person name="Dodson R.J."/>
            <person name="Durkin A.S."/>
            <person name="Rosovitz M.J."/>
            <person name="Rasko D.A."/>
            <person name="Kolsto A.B."/>
            <person name="Okstad O.A."/>
            <person name="Ravel J."/>
            <person name="Sutton G."/>
        </authorList>
    </citation>
    <scope>NUCLEOTIDE SEQUENCE [LARGE SCALE GENOMIC DNA]</scope>
    <source>
        <strain>AH187</strain>
    </source>
</reference>
<evidence type="ECO:0000255" key="1">
    <source>
        <dbReference type="HAMAP-Rule" id="MF_01219"/>
    </source>
</evidence>
<proteinExistence type="inferred from homology"/>
<comment type="function">
    <text evidence="1">Regulates transcriptional attenuation of the pyrimidine nucleotide (pyr) operon by binding in a uridine-dependent manner to specific sites on pyr mRNA. This disrupts an antiterminator hairpin in the RNA and favors formation of a downstream transcription terminator, leading to a reduced expression of downstream genes.</text>
</comment>
<comment type="function">
    <text evidence="1">Also displays a weak uracil phosphoribosyltransferase activity which is not physiologically significant.</text>
</comment>
<comment type="catalytic activity">
    <reaction evidence="1">
        <text>UMP + diphosphate = 5-phospho-alpha-D-ribose 1-diphosphate + uracil</text>
        <dbReference type="Rhea" id="RHEA:13017"/>
        <dbReference type="ChEBI" id="CHEBI:17568"/>
        <dbReference type="ChEBI" id="CHEBI:33019"/>
        <dbReference type="ChEBI" id="CHEBI:57865"/>
        <dbReference type="ChEBI" id="CHEBI:58017"/>
        <dbReference type="EC" id="2.4.2.9"/>
    </reaction>
</comment>
<comment type="subunit">
    <text evidence="1">Homodimer and homohexamer; in equilibrium.</text>
</comment>
<comment type="similarity">
    <text evidence="1">Belongs to the purine/pyrimidine phosphoribosyltransferase family. PyrR subfamily.</text>
</comment>
<keyword id="KW-0328">Glycosyltransferase</keyword>
<keyword id="KW-0694">RNA-binding</keyword>
<keyword id="KW-0804">Transcription</keyword>
<keyword id="KW-0805">Transcription regulation</keyword>
<keyword id="KW-0806">Transcription termination</keyword>
<keyword id="KW-0808">Transferase</keyword>
<protein>
    <recommendedName>
        <fullName evidence="1">Bifunctional protein PyrR</fullName>
    </recommendedName>
    <domain>
        <recommendedName>
            <fullName evidence="1">Pyrimidine operon regulatory protein</fullName>
        </recommendedName>
    </domain>
    <domain>
        <recommendedName>
            <fullName evidence="1">Uracil phosphoribosyltransferase</fullName>
            <shortName evidence="1">UPRTase</shortName>
            <ecNumber evidence="1">2.4.2.9</ecNumber>
        </recommendedName>
    </domain>
</protein>
<dbReference type="EC" id="2.4.2.9" evidence="1"/>
<dbReference type="EMBL" id="CP001177">
    <property type="protein sequence ID" value="ACJ78787.1"/>
    <property type="molecule type" value="Genomic_DNA"/>
</dbReference>
<dbReference type="SMR" id="B7HLM5"/>
<dbReference type="KEGG" id="bcr:BCAH187_A3942"/>
<dbReference type="HOGENOM" id="CLU_094234_2_1_9"/>
<dbReference type="Proteomes" id="UP000002214">
    <property type="component" value="Chromosome"/>
</dbReference>
<dbReference type="GO" id="GO:0003723">
    <property type="term" value="F:RNA binding"/>
    <property type="evidence" value="ECO:0007669"/>
    <property type="project" value="UniProtKB-UniRule"/>
</dbReference>
<dbReference type="GO" id="GO:0004845">
    <property type="term" value="F:uracil phosphoribosyltransferase activity"/>
    <property type="evidence" value="ECO:0007669"/>
    <property type="project" value="UniProtKB-UniRule"/>
</dbReference>
<dbReference type="GO" id="GO:0006353">
    <property type="term" value="P:DNA-templated transcription termination"/>
    <property type="evidence" value="ECO:0007669"/>
    <property type="project" value="UniProtKB-UniRule"/>
</dbReference>
<dbReference type="CDD" id="cd06223">
    <property type="entry name" value="PRTases_typeI"/>
    <property type="match status" value="1"/>
</dbReference>
<dbReference type="FunFam" id="3.40.50.2020:FF:000020">
    <property type="entry name" value="Bifunctional protein PyrR"/>
    <property type="match status" value="1"/>
</dbReference>
<dbReference type="Gene3D" id="3.40.50.2020">
    <property type="match status" value="1"/>
</dbReference>
<dbReference type="HAMAP" id="MF_01219">
    <property type="entry name" value="PyrR"/>
    <property type="match status" value="1"/>
</dbReference>
<dbReference type="InterPro" id="IPR000836">
    <property type="entry name" value="PRibTrfase_dom"/>
</dbReference>
<dbReference type="InterPro" id="IPR029057">
    <property type="entry name" value="PRTase-like"/>
</dbReference>
<dbReference type="InterPro" id="IPR023050">
    <property type="entry name" value="PyrR"/>
</dbReference>
<dbReference type="InterPro" id="IPR050137">
    <property type="entry name" value="PyrR_bifunctional"/>
</dbReference>
<dbReference type="NCBIfam" id="NF003545">
    <property type="entry name" value="PRK05205.1-1"/>
    <property type="match status" value="1"/>
</dbReference>
<dbReference type="NCBIfam" id="NF003547">
    <property type="entry name" value="PRK05205.1-3"/>
    <property type="match status" value="1"/>
</dbReference>
<dbReference type="NCBIfam" id="NF003548">
    <property type="entry name" value="PRK05205.1-4"/>
    <property type="match status" value="1"/>
</dbReference>
<dbReference type="NCBIfam" id="NF003549">
    <property type="entry name" value="PRK05205.1-5"/>
    <property type="match status" value="1"/>
</dbReference>
<dbReference type="PANTHER" id="PTHR11608">
    <property type="entry name" value="BIFUNCTIONAL PROTEIN PYRR"/>
    <property type="match status" value="1"/>
</dbReference>
<dbReference type="PANTHER" id="PTHR11608:SF0">
    <property type="entry name" value="BIFUNCTIONAL PROTEIN PYRR"/>
    <property type="match status" value="1"/>
</dbReference>
<dbReference type="Pfam" id="PF00156">
    <property type="entry name" value="Pribosyltran"/>
    <property type="match status" value="1"/>
</dbReference>
<dbReference type="SUPFAM" id="SSF53271">
    <property type="entry name" value="PRTase-like"/>
    <property type="match status" value="1"/>
</dbReference>
<accession>B7HLM5</accession>